<organism>
    <name type="scientific">Caulobacter vibrioides (strain NA1000 / CB15N)</name>
    <name type="common">Caulobacter crescentus</name>
    <dbReference type="NCBI Taxonomy" id="565050"/>
    <lineage>
        <taxon>Bacteria</taxon>
        <taxon>Pseudomonadati</taxon>
        <taxon>Pseudomonadota</taxon>
        <taxon>Alphaproteobacteria</taxon>
        <taxon>Caulobacterales</taxon>
        <taxon>Caulobacteraceae</taxon>
        <taxon>Caulobacter</taxon>
    </lineage>
</organism>
<proteinExistence type="inferred from homology"/>
<reference key="1">
    <citation type="journal article" date="2010" name="J. Bacteriol.">
        <title>The genetic basis of laboratory adaptation in Caulobacter crescentus.</title>
        <authorList>
            <person name="Marks M.E."/>
            <person name="Castro-Rojas C.M."/>
            <person name="Teiling C."/>
            <person name="Du L."/>
            <person name="Kapatral V."/>
            <person name="Walunas T.L."/>
            <person name="Crosson S."/>
        </authorList>
    </citation>
    <scope>NUCLEOTIDE SEQUENCE [LARGE SCALE GENOMIC DNA]</scope>
    <source>
        <strain>NA1000 / CB15N</strain>
    </source>
</reference>
<name>QUEA_CAUVN</name>
<gene>
    <name evidence="1" type="primary">queA</name>
    <name type="ordered locus">CCNA_01658</name>
</gene>
<evidence type="ECO:0000255" key="1">
    <source>
        <dbReference type="HAMAP-Rule" id="MF_00113"/>
    </source>
</evidence>
<comment type="function">
    <text evidence="1">Transfers and isomerizes the ribose moiety from AdoMet to the 7-aminomethyl group of 7-deazaguanine (preQ1-tRNA) to give epoxyqueuosine (oQ-tRNA).</text>
</comment>
<comment type="catalytic activity">
    <reaction evidence="1">
        <text>7-aminomethyl-7-carbaguanosine(34) in tRNA + S-adenosyl-L-methionine = epoxyqueuosine(34) in tRNA + adenine + L-methionine + 2 H(+)</text>
        <dbReference type="Rhea" id="RHEA:32155"/>
        <dbReference type="Rhea" id="RHEA-COMP:10342"/>
        <dbReference type="Rhea" id="RHEA-COMP:18582"/>
        <dbReference type="ChEBI" id="CHEBI:15378"/>
        <dbReference type="ChEBI" id="CHEBI:16708"/>
        <dbReference type="ChEBI" id="CHEBI:57844"/>
        <dbReference type="ChEBI" id="CHEBI:59789"/>
        <dbReference type="ChEBI" id="CHEBI:82833"/>
        <dbReference type="ChEBI" id="CHEBI:194443"/>
        <dbReference type="EC" id="2.4.99.17"/>
    </reaction>
</comment>
<comment type="pathway">
    <text evidence="1">tRNA modification; tRNA-queuosine biosynthesis.</text>
</comment>
<comment type="subunit">
    <text evidence="1">Monomer.</text>
</comment>
<comment type="subcellular location">
    <subcellularLocation>
        <location evidence="1">Cytoplasm</location>
    </subcellularLocation>
</comment>
<comment type="similarity">
    <text evidence="1">Belongs to the QueA family.</text>
</comment>
<accession>B8GVF3</accession>
<sequence length="366" mass="39817">MRLSDFDFDLPEDRIALRPAEPRDSARFLVVRPGQAVADHIVSDLPDFLRPGDALVFNDTRVIPARLSGLREGRTTGGADGTPVAVEATLHRRLAPDRWSAFMRPGKRLKVGDRVAFGGHEGRVGDLGRLDAVIAEKHDGGEVVLAFDLSGPDLDVGIAQHGDMPLPPYIAAKRGEDERDRADYQTVYAREDGSVAAPTAGLHFTPQLLERLKAKGVSLHFVTLHVGAGTFLPVKTDEVSEHRMHAEYGQVTQEIADALNAARAAGGRIVCVGTTSLRLLESATGEDGIVRPFADETAIFITPGYRFRTADVLMTNFHLPKSTLFMLVSAFAGTEAMRAAYEHAIATGYRFYSYGDSSLLFKDETC</sequence>
<feature type="chain" id="PRO_1000119147" description="S-adenosylmethionine:tRNA ribosyltransferase-isomerase">
    <location>
        <begin position="1"/>
        <end position="366"/>
    </location>
</feature>
<protein>
    <recommendedName>
        <fullName evidence="1">S-adenosylmethionine:tRNA ribosyltransferase-isomerase</fullName>
        <ecNumber evidence="1">2.4.99.17</ecNumber>
    </recommendedName>
    <alternativeName>
        <fullName evidence="1">Queuosine biosynthesis protein QueA</fullName>
    </alternativeName>
</protein>
<keyword id="KW-0963">Cytoplasm</keyword>
<keyword id="KW-0671">Queuosine biosynthesis</keyword>
<keyword id="KW-1185">Reference proteome</keyword>
<keyword id="KW-0949">S-adenosyl-L-methionine</keyword>
<keyword id="KW-0808">Transferase</keyword>
<dbReference type="EC" id="2.4.99.17" evidence="1"/>
<dbReference type="EMBL" id="CP001340">
    <property type="protein sequence ID" value="ACL95123.1"/>
    <property type="molecule type" value="Genomic_DNA"/>
</dbReference>
<dbReference type="RefSeq" id="WP_010919461.1">
    <property type="nucleotide sequence ID" value="NC_011916.1"/>
</dbReference>
<dbReference type="RefSeq" id="YP_002517031.1">
    <property type="nucleotide sequence ID" value="NC_011916.1"/>
</dbReference>
<dbReference type="SMR" id="B8GVF3"/>
<dbReference type="GeneID" id="7331717"/>
<dbReference type="KEGG" id="ccs:CCNA_01658"/>
<dbReference type="PATRIC" id="fig|565050.3.peg.1634"/>
<dbReference type="HOGENOM" id="CLU_039110_1_1_5"/>
<dbReference type="OrthoDB" id="9805933at2"/>
<dbReference type="PhylomeDB" id="B8GVF3"/>
<dbReference type="UniPathway" id="UPA00392"/>
<dbReference type="Proteomes" id="UP000001364">
    <property type="component" value="Chromosome"/>
</dbReference>
<dbReference type="GO" id="GO:0005737">
    <property type="term" value="C:cytoplasm"/>
    <property type="evidence" value="ECO:0007669"/>
    <property type="project" value="UniProtKB-SubCell"/>
</dbReference>
<dbReference type="GO" id="GO:0051075">
    <property type="term" value="F:S-adenosylmethionine:tRNA ribosyltransferase-isomerase activity"/>
    <property type="evidence" value="ECO:0007669"/>
    <property type="project" value="UniProtKB-EC"/>
</dbReference>
<dbReference type="GO" id="GO:0008616">
    <property type="term" value="P:queuosine biosynthetic process"/>
    <property type="evidence" value="ECO:0007669"/>
    <property type="project" value="UniProtKB-UniRule"/>
</dbReference>
<dbReference type="GO" id="GO:0002099">
    <property type="term" value="P:tRNA wobble guanine modification"/>
    <property type="evidence" value="ECO:0007669"/>
    <property type="project" value="TreeGrafter"/>
</dbReference>
<dbReference type="FunFam" id="3.40.1780.10:FF:000001">
    <property type="entry name" value="S-adenosylmethionine:tRNA ribosyltransferase-isomerase"/>
    <property type="match status" value="1"/>
</dbReference>
<dbReference type="Gene3D" id="2.40.10.240">
    <property type="entry name" value="QueA-like"/>
    <property type="match status" value="1"/>
</dbReference>
<dbReference type="Gene3D" id="3.40.1780.10">
    <property type="entry name" value="QueA-like"/>
    <property type="match status" value="2"/>
</dbReference>
<dbReference type="HAMAP" id="MF_00113">
    <property type="entry name" value="QueA"/>
    <property type="match status" value="1"/>
</dbReference>
<dbReference type="InterPro" id="IPR003699">
    <property type="entry name" value="QueA"/>
</dbReference>
<dbReference type="InterPro" id="IPR042118">
    <property type="entry name" value="QueA_dom1"/>
</dbReference>
<dbReference type="InterPro" id="IPR042119">
    <property type="entry name" value="QueA_dom2"/>
</dbReference>
<dbReference type="InterPro" id="IPR036100">
    <property type="entry name" value="QueA_sf"/>
</dbReference>
<dbReference type="NCBIfam" id="NF001140">
    <property type="entry name" value="PRK00147.1"/>
    <property type="match status" value="1"/>
</dbReference>
<dbReference type="NCBIfam" id="TIGR00113">
    <property type="entry name" value="queA"/>
    <property type="match status" value="1"/>
</dbReference>
<dbReference type="PANTHER" id="PTHR30307">
    <property type="entry name" value="S-ADENOSYLMETHIONINE:TRNA RIBOSYLTRANSFERASE-ISOMERASE"/>
    <property type="match status" value="1"/>
</dbReference>
<dbReference type="PANTHER" id="PTHR30307:SF0">
    <property type="entry name" value="S-ADENOSYLMETHIONINE:TRNA RIBOSYLTRANSFERASE-ISOMERASE"/>
    <property type="match status" value="1"/>
</dbReference>
<dbReference type="Pfam" id="PF02547">
    <property type="entry name" value="Queuosine_synth"/>
    <property type="match status" value="1"/>
</dbReference>
<dbReference type="SUPFAM" id="SSF111337">
    <property type="entry name" value="QueA-like"/>
    <property type="match status" value="1"/>
</dbReference>